<name>GAO1B_WHEAT</name>
<protein>
    <recommendedName>
        <fullName>Gibberellin 20 oxidase 1-B</fullName>
        <ecNumber evidence="2">1.14.11.-</ecNumber>
    </recommendedName>
    <alternativeName>
        <fullName>GA 20-oxidase 1-B</fullName>
    </alternativeName>
    <alternativeName>
        <fullName>Gibberellin C-20 oxidase 1-B</fullName>
    </alternativeName>
    <alternativeName>
        <fullName>TaGA20ox1-B</fullName>
        <shortName>Ta20ox1B</shortName>
    </alternativeName>
</protein>
<keyword id="KW-0408">Iron</keyword>
<keyword id="KW-0479">Metal-binding</keyword>
<keyword id="KW-0560">Oxidoreductase</keyword>
<keyword id="KW-1185">Reference proteome</keyword>
<organism>
    <name type="scientific">Triticum aestivum</name>
    <name type="common">Wheat</name>
    <dbReference type="NCBI Taxonomy" id="4565"/>
    <lineage>
        <taxon>Eukaryota</taxon>
        <taxon>Viridiplantae</taxon>
        <taxon>Streptophyta</taxon>
        <taxon>Embryophyta</taxon>
        <taxon>Tracheophyta</taxon>
        <taxon>Spermatophyta</taxon>
        <taxon>Magnoliopsida</taxon>
        <taxon>Liliopsida</taxon>
        <taxon>Poales</taxon>
        <taxon>Poaceae</taxon>
        <taxon>BOP clade</taxon>
        <taxon>Pooideae</taxon>
        <taxon>Triticodae</taxon>
        <taxon>Triticeae</taxon>
        <taxon>Triticinae</taxon>
        <taxon>Triticum</taxon>
    </lineage>
</organism>
<comment type="function">
    <text evidence="5">Key oxidase enzyme in the biosynthesis of gibberellin that catalyzes the conversion of GA12 and GA53 to GA9 and GA20 respectively, via a three-step oxidation at C-20 of the GA skeleton.</text>
</comment>
<comment type="catalytic activity">
    <reaction evidence="2">
        <text>gibberellin A12 + 2 2-oxoglutarate + 3 O2 + H(+) = gibberellin A9 + 2 succinate + 3 CO2 + 2 H2O</text>
        <dbReference type="Rhea" id="RHEA:60772"/>
        <dbReference type="ChEBI" id="CHEBI:15377"/>
        <dbReference type="ChEBI" id="CHEBI:15378"/>
        <dbReference type="ChEBI" id="CHEBI:15379"/>
        <dbReference type="ChEBI" id="CHEBI:16526"/>
        <dbReference type="ChEBI" id="CHEBI:16810"/>
        <dbReference type="ChEBI" id="CHEBI:30031"/>
        <dbReference type="ChEBI" id="CHEBI:58627"/>
        <dbReference type="ChEBI" id="CHEBI:73255"/>
    </reaction>
    <physiologicalReaction direction="left-to-right" evidence="2">
        <dbReference type="Rhea" id="RHEA:60773"/>
    </physiologicalReaction>
</comment>
<comment type="catalytic activity">
    <reaction evidence="2">
        <text>gibberellin A53 + 2 2-oxoglutarate + 3 O2 + H(+) = gibberellin A20 + 2 succinate + 3 CO2 + 2 H2O</text>
        <dbReference type="Rhea" id="RHEA:60796"/>
        <dbReference type="ChEBI" id="CHEBI:15377"/>
        <dbReference type="ChEBI" id="CHEBI:15378"/>
        <dbReference type="ChEBI" id="CHEBI:15379"/>
        <dbReference type="ChEBI" id="CHEBI:16526"/>
        <dbReference type="ChEBI" id="CHEBI:16810"/>
        <dbReference type="ChEBI" id="CHEBI:30031"/>
        <dbReference type="ChEBI" id="CHEBI:58526"/>
        <dbReference type="ChEBI" id="CHEBI:143954"/>
    </reaction>
    <physiologicalReaction direction="left-to-right" evidence="2">
        <dbReference type="Rhea" id="RHEA:60797"/>
    </physiologicalReaction>
</comment>
<comment type="cofactor">
    <cofactor evidence="1">
        <name>Fe cation</name>
        <dbReference type="ChEBI" id="CHEBI:24875"/>
    </cofactor>
</comment>
<comment type="cofactor">
    <cofactor evidence="1">
        <name>L-ascorbate</name>
        <dbReference type="ChEBI" id="CHEBI:38290"/>
    </cofactor>
</comment>
<comment type="tissue specificity">
    <text evidence="5">Not detected in nodes and the ear of the elongating stem.</text>
</comment>
<comment type="developmental stage">
    <text evidence="5">Expressed in the embryo and the surrounding maternal tissues, the pericarp and the integuments. Also found in the germinating grain.</text>
</comment>
<comment type="miscellaneous">
    <text>The expression of this protein encoded by the B genome of the hexaploid wheat is much lower than the one of the two homologous proteins encoded by the A and D genomes.</text>
</comment>
<comment type="similarity">
    <text evidence="6">Belongs to the iron/ascorbate-dependent oxidoreductase family. GA20OX subfamily.</text>
</comment>
<accession>O04706</accession>
<proteinExistence type="evidence at transcript level"/>
<feature type="chain" id="PRO_0000219519" description="Gibberellin 20 oxidase 1-B">
    <location>
        <begin position="1"/>
        <end position="365"/>
    </location>
</feature>
<feature type="domain" description="Fe2OG dioxygenase" evidence="4">
    <location>
        <begin position="199"/>
        <end position="299"/>
    </location>
</feature>
<feature type="active site" evidence="3">
    <location>
        <position position="290"/>
    </location>
</feature>
<feature type="binding site" evidence="4">
    <location>
        <position position="224"/>
    </location>
    <ligand>
        <name>Fe cation</name>
        <dbReference type="ChEBI" id="CHEBI:24875"/>
    </ligand>
</feature>
<feature type="binding site" evidence="4">
    <location>
        <position position="226"/>
    </location>
    <ligand>
        <name>Fe cation</name>
        <dbReference type="ChEBI" id="CHEBI:24875"/>
    </ligand>
</feature>
<feature type="binding site" evidence="4">
    <location>
        <position position="280"/>
    </location>
    <ligand>
        <name>Fe cation</name>
        <dbReference type="ChEBI" id="CHEBI:24875"/>
    </ligand>
</feature>
<gene>
    <name type="primary">GA20ox1B</name>
</gene>
<sequence>MVQPVFDAAVLSGRADIPSQFIWPEGESPTPDAAEELHVPLIDIGGMLSGDPRATAEVTRLVGEACERHGFFQVVNHGIDAELLADAHRCVDAFFTMPLPEKQRALRRPGESCGYASSFTGRFASKLPWKETLSFRSCPSDPALVVDYIVATLGEDHRRLGEVYARYCSEMSRLSLEIMEVLGESLGVGRAHYRRFFEGNDSIMRLNYYPPCQRPMETLGTGPHCDPTSLTILHQDNVGGLQVHTEGRWRSIRPRADAFVVNIGDTFMALSNGRYKSCLHRAVVNSKVPRKSLAFFLCPEMDKVVAPPGTLVDAANPRAYPDFTWRSLLDFTQKHYRADMKTLEVFSSWIVQQQQGQLLPPLASH</sequence>
<dbReference type="EC" id="1.14.11.-" evidence="2"/>
<dbReference type="EMBL" id="Y14008">
    <property type="protein sequence ID" value="CAA74331.1"/>
    <property type="molecule type" value="mRNA"/>
</dbReference>
<dbReference type="PIR" id="T06990">
    <property type="entry name" value="T06990"/>
</dbReference>
<dbReference type="SMR" id="O04706"/>
<dbReference type="STRING" id="4565.O04706"/>
<dbReference type="EnsemblPlants" id="TraesARI7B03G04342440.1">
    <property type="protein sequence ID" value="TraesARI7B03G04342440.1"/>
    <property type="gene ID" value="TraesARI7B03G04342440"/>
</dbReference>
<dbReference type="EnsemblPlants" id="TraesJAG5B03G03019160.1">
    <property type="protein sequence ID" value="TraesJAG5B03G03019160.1"/>
    <property type="gene ID" value="TraesJAG5B03G03019160"/>
</dbReference>
<dbReference type="EnsemblPlants" id="TraesJUL5B03G03044800.1">
    <property type="protein sequence ID" value="TraesJUL5B03G03044800.1"/>
    <property type="gene ID" value="TraesJUL5B03G03044800"/>
</dbReference>
<dbReference type="EnsemblPlants" id="TraesSYM7B03G03994940.1">
    <property type="protein sequence ID" value="TraesSYM7B03G03994940.1"/>
    <property type="gene ID" value="TraesSYM7B03G03994940"/>
</dbReference>
<dbReference type="Gramene" id="TraesARI7B03G04342440.1">
    <property type="protein sequence ID" value="TraesARI7B03G04342440.1"/>
    <property type="gene ID" value="TraesARI7B03G04342440"/>
</dbReference>
<dbReference type="Gramene" id="TraesJAG5B03G03019160.1">
    <property type="protein sequence ID" value="TraesJAG5B03G03019160.1"/>
    <property type="gene ID" value="TraesJAG5B03G03019160"/>
</dbReference>
<dbReference type="Gramene" id="TraesJUL5B03G03044800.1">
    <property type="protein sequence ID" value="TraesJUL5B03G03044800.1"/>
    <property type="gene ID" value="TraesJUL5B03G03044800"/>
</dbReference>
<dbReference type="Gramene" id="TraesSYM7B03G03994940.1">
    <property type="protein sequence ID" value="TraesSYM7B03G03994940.1"/>
    <property type="gene ID" value="TraesSYM7B03G03994940"/>
</dbReference>
<dbReference type="BioCyc" id="MetaCyc:MONOMER-11643"/>
<dbReference type="Proteomes" id="UP000019116">
    <property type="component" value="Unplaced"/>
</dbReference>
<dbReference type="ExpressionAtlas" id="O04706">
    <property type="expression patterns" value="baseline"/>
</dbReference>
<dbReference type="GO" id="GO:0045544">
    <property type="term" value="F:gibberellin 20-oxidase activity"/>
    <property type="evidence" value="ECO:0000318"/>
    <property type="project" value="GO_Central"/>
</dbReference>
<dbReference type="GO" id="GO:0046872">
    <property type="term" value="F:metal ion binding"/>
    <property type="evidence" value="ECO:0007669"/>
    <property type="project" value="UniProtKB-KW"/>
</dbReference>
<dbReference type="GO" id="GO:0009908">
    <property type="term" value="P:flower development"/>
    <property type="evidence" value="ECO:0000318"/>
    <property type="project" value="GO_Central"/>
</dbReference>
<dbReference type="GO" id="GO:0009686">
    <property type="term" value="P:gibberellin biosynthetic process"/>
    <property type="evidence" value="ECO:0000318"/>
    <property type="project" value="GO_Central"/>
</dbReference>
<dbReference type="GO" id="GO:0009416">
    <property type="term" value="P:response to light stimulus"/>
    <property type="evidence" value="ECO:0000318"/>
    <property type="project" value="GO_Central"/>
</dbReference>
<dbReference type="GO" id="GO:0009826">
    <property type="term" value="P:unidimensional cell growth"/>
    <property type="evidence" value="ECO:0000318"/>
    <property type="project" value="GO_Central"/>
</dbReference>
<dbReference type="FunFam" id="2.60.120.330:FF:000003">
    <property type="entry name" value="Gibberellin 20 oxidase 2"/>
    <property type="match status" value="1"/>
</dbReference>
<dbReference type="Gene3D" id="2.60.120.330">
    <property type="entry name" value="B-lactam Antibiotic, Isopenicillin N Synthase, Chain"/>
    <property type="match status" value="1"/>
</dbReference>
<dbReference type="InterPro" id="IPR026992">
    <property type="entry name" value="DIOX_N"/>
</dbReference>
<dbReference type="InterPro" id="IPR044861">
    <property type="entry name" value="IPNS-like_FE2OG_OXY"/>
</dbReference>
<dbReference type="InterPro" id="IPR027443">
    <property type="entry name" value="IPNS-like_sf"/>
</dbReference>
<dbReference type="InterPro" id="IPR050231">
    <property type="entry name" value="Iron_ascorbate_oxido_reductase"/>
</dbReference>
<dbReference type="InterPro" id="IPR005123">
    <property type="entry name" value="Oxoglu/Fe-dep_dioxygenase_dom"/>
</dbReference>
<dbReference type="PANTHER" id="PTHR47990">
    <property type="entry name" value="2-OXOGLUTARATE (2OG) AND FE(II)-DEPENDENT OXYGENASE SUPERFAMILY PROTEIN-RELATED"/>
    <property type="match status" value="1"/>
</dbReference>
<dbReference type="Pfam" id="PF03171">
    <property type="entry name" value="2OG-FeII_Oxy"/>
    <property type="match status" value="1"/>
</dbReference>
<dbReference type="Pfam" id="PF14226">
    <property type="entry name" value="DIOX_N"/>
    <property type="match status" value="1"/>
</dbReference>
<dbReference type="SUPFAM" id="SSF51197">
    <property type="entry name" value="Clavaminate synthase-like"/>
    <property type="match status" value="1"/>
</dbReference>
<dbReference type="PROSITE" id="PS51471">
    <property type="entry name" value="FE2OG_OXY"/>
    <property type="match status" value="1"/>
</dbReference>
<reference key="1">
    <citation type="journal article" date="2006" name="Planta">
        <title>Function and transcript analysis of gibberellin-biosynthetic enzymes in wheat.</title>
        <authorList>
            <person name="Appleford N.E."/>
            <person name="Evans D.J."/>
            <person name="Lenton J.R."/>
            <person name="Gaskin P."/>
            <person name="Croker S.J."/>
            <person name="Devos K.M."/>
            <person name="Phillips A.L."/>
            <person name="Hedden P."/>
        </authorList>
    </citation>
    <scope>NUCLEOTIDE SEQUENCE [MRNA]</scope>
    <scope>TISSUE SPECIFICITY</scope>
    <scope>DEVELOPMENTAL STAGE</scope>
    <scope>FUNCTION</scope>
    <source>
        <strain>cv. Maris Huntsman</strain>
        <tissue>Scutellum</tissue>
    </source>
</reference>
<evidence type="ECO:0000250" key="1"/>
<evidence type="ECO:0000250" key="2">
    <source>
        <dbReference type="UniProtKB" id="O04705"/>
    </source>
</evidence>
<evidence type="ECO:0000255" key="3"/>
<evidence type="ECO:0000255" key="4">
    <source>
        <dbReference type="PROSITE-ProRule" id="PRU00805"/>
    </source>
</evidence>
<evidence type="ECO:0000269" key="5">
    <source>
    </source>
</evidence>
<evidence type="ECO:0000305" key="6"/>